<evidence type="ECO:0000255" key="1">
    <source>
        <dbReference type="PROSITE-ProRule" id="PRU00541"/>
    </source>
</evidence>
<evidence type="ECO:0000255" key="2">
    <source>
        <dbReference type="PROSITE-ProRule" id="PRU00542"/>
    </source>
</evidence>
<evidence type="ECO:0000256" key="3">
    <source>
        <dbReference type="SAM" id="MobiDB-lite"/>
    </source>
</evidence>
<evidence type="ECO:0000305" key="4"/>
<proteinExistence type="evidence at transcript level"/>
<comment type="catalytic activity">
    <reaction>
        <text>ATP + H2O = ADP + phosphate + H(+)</text>
        <dbReference type="Rhea" id="RHEA:13065"/>
        <dbReference type="ChEBI" id="CHEBI:15377"/>
        <dbReference type="ChEBI" id="CHEBI:15378"/>
        <dbReference type="ChEBI" id="CHEBI:30616"/>
        <dbReference type="ChEBI" id="CHEBI:43474"/>
        <dbReference type="ChEBI" id="CHEBI:456216"/>
        <dbReference type="EC" id="3.6.4.13"/>
    </reaction>
</comment>
<comment type="domain">
    <text>The Q motif is unique to and characteristic of the DEAD box family of RNA helicases and controls ATP binding and hydrolysis.</text>
</comment>
<comment type="similarity">
    <text evidence="4">Belongs to the DEAD box helicase family. DDX56/DBP9 subfamily.</text>
</comment>
<dbReference type="EC" id="3.6.4.13"/>
<dbReference type="EMBL" id="AC120983">
    <property type="protein sequence ID" value="AAO38473.1"/>
    <property type="molecule type" value="Genomic_DNA"/>
</dbReference>
<dbReference type="EMBL" id="AC135956">
    <property type="protein sequence ID" value="AAT77055.1"/>
    <property type="molecule type" value="Genomic_DNA"/>
</dbReference>
<dbReference type="EMBL" id="DP000009">
    <property type="protein sequence ID" value="ABF98674.1"/>
    <property type="molecule type" value="Genomic_DNA"/>
</dbReference>
<dbReference type="EMBL" id="AP008209">
    <property type="protein sequence ID" value="BAF13063.1"/>
    <property type="molecule type" value="Genomic_DNA"/>
</dbReference>
<dbReference type="EMBL" id="AP014959">
    <property type="protein sequence ID" value="BAS86195.1"/>
    <property type="molecule type" value="Genomic_DNA"/>
</dbReference>
<dbReference type="EMBL" id="AK068068">
    <property type="protein sequence ID" value="BAG90740.1"/>
    <property type="molecule type" value="mRNA"/>
</dbReference>
<dbReference type="RefSeq" id="XP_015632665.1">
    <property type="nucleotide sequence ID" value="XM_015777179.1"/>
</dbReference>
<dbReference type="SMR" id="Q6ATJ8"/>
<dbReference type="FunCoup" id="Q6ATJ8">
    <property type="interactions" value="2110"/>
</dbReference>
<dbReference type="STRING" id="39947.Q6ATJ8"/>
<dbReference type="PaxDb" id="39947-Q6ATJ8"/>
<dbReference type="EnsemblPlants" id="Os03t0728800-01">
    <property type="protein sequence ID" value="Os03t0728800-01"/>
    <property type="gene ID" value="Os03g0728800"/>
</dbReference>
<dbReference type="Gramene" id="Os03t0728800-01">
    <property type="protein sequence ID" value="Os03t0728800-01"/>
    <property type="gene ID" value="Os03g0728800"/>
</dbReference>
<dbReference type="KEGG" id="dosa:Os03g0728800"/>
<dbReference type="eggNOG" id="KOG0346">
    <property type="taxonomic scope" value="Eukaryota"/>
</dbReference>
<dbReference type="HOGENOM" id="CLU_003041_17_1_1"/>
<dbReference type="InParanoid" id="Q6ATJ8"/>
<dbReference type="OMA" id="NASEQCV"/>
<dbReference type="OrthoDB" id="1191041at2759"/>
<dbReference type="Proteomes" id="UP000000763">
    <property type="component" value="Chromosome 3"/>
</dbReference>
<dbReference type="Proteomes" id="UP000059680">
    <property type="component" value="Chromosome 3"/>
</dbReference>
<dbReference type="ExpressionAtlas" id="Q6ATJ8">
    <property type="expression patterns" value="baseline and differential"/>
</dbReference>
<dbReference type="GO" id="GO:0005730">
    <property type="term" value="C:nucleolus"/>
    <property type="evidence" value="ECO:0000318"/>
    <property type="project" value="GO_Central"/>
</dbReference>
<dbReference type="GO" id="GO:0005524">
    <property type="term" value="F:ATP binding"/>
    <property type="evidence" value="ECO:0007669"/>
    <property type="project" value="UniProtKB-KW"/>
</dbReference>
<dbReference type="GO" id="GO:0016887">
    <property type="term" value="F:ATP hydrolysis activity"/>
    <property type="evidence" value="ECO:0007669"/>
    <property type="project" value="RHEA"/>
</dbReference>
<dbReference type="GO" id="GO:0003729">
    <property type="term" value="F:mRNA binding"/>
    <property type="evidence" value="ECO:0007669"/>
    <property type="project" value="EnsemblPlants"/>
</dbReference>
<dbReference type="GO" id="GO:0003724">
    <property type="term" value="F:RNA helicase activity"/>
    <property type="evidence" value="ECO:0007669"/>
    <property type="project" value="UniProtKB-EC"/>
</dbReference>
<dbReference type="CDD" id="cd17961">
    <property type="entry name" value="DEADc_DDX56"/>
    <property type="match status" value="1"/>
</dbReference>
<dbReference type="CDD" id="cd18787">
    <property type="entry name" value="SF2_C_DEAD"/>
    <property type="match status" value="1"/>
</dbReference>
<dbReference type="Gene3D" id="3.40.50.300">
    <property type="entry name" value="P-loop containing nucleotide triphosphate hydrolases"/>
    <property type="match status" value="2"/>
</dbReference>
<dbReference type="InterPro" id="IPR011545">
    <property type="entry name" value="DEAD/DEAH_box_helicase_dom"/>
</dbReference>
<dbReference type="InterPro" id="IPR050079">
    <property type="entry name" value="DEAD_box_RNA_helicase"/>
</dbReference>
<dbReference type="InterPro" id="IPR014001">
    <property type="entry name" value="Helicase_ATP-bd"/>
</dbReference>
<dbReference type="InterPro" id="IPR001650">
    <property type="entry name" value="Helicase_C-like"/>
</dbReference>
<dbReference type="InterPro" id="IPR027417">
    <property type="entry name" value="P-loop_NTPase"/>
</dbReference>
<dbReference type="InterPro" id="IPR014014">
    <property type="entry name" value="RNA_helicase_DEAD_Q_motif"/>
</dbReference>
<dbReference type="PANTHER" id="PTHR47959">
    <property type="entry name" value="ATP-DEPENDENT RNA HELICASE RHLE-RELATED"/>
    <property type="match status" value="1"/>
</dbReference>
<dbReference type="PANTHER" id="PTHR47959:SF21">
    <property type="entry name" value="DEAD-BOX HELICASE 56"/>
    <property type="match status" value="1"/>
</dbReference>
<dbReference type="Pfam" id="PF00270">
    <property type="entry name" value="DEAD"/>
    <property type="match status" value="1"/>
</dbReference>
<dbReference type="Pfam" id="PF00271">
    <property type="entry name" value="Helicase_C"/>
    <property type="match status" value="1"/>
</dbReference>
<dbReference type="SMART" id="SM00487">
    <property type="entry name" value="DEXDc"/>
    <property type="match status" value="1"/>
</dbReference>
<dbReference type="SMART" id="SM00490">
    <property type="entry name" value="HELICc"/>
    <property type="match status" value="1"/>
</dbReference>
<dbReference type="SUPFAM" id="SSF52540">
    <property type="entry name" value="P-loop containing nucleoside triphosphate hydrolases"/>
    <property type="match status" value="2"/>
</dbReference>
<dbReference type="PROSITE" id="PS51192">
    <property type="entry name" value="HELICASE_ATP_BIND_1"/>
    <property type="match status" value="1"/>
</dbReference>
<dbReference type="PROSITE" id="PS51194">
    <property type="entry name" value="HELICASE_CTER"/>
    <property type="match status" value="1"/>
</dbReference>
<dbReference type="PROSITE" id="PS51195">
    <property type="entry name" value="Q_MOTIF"/>
    <property type="match status" value="1"/>
</dbReference>
<organism>
    <name type="scientific">Oryza sativa subsp. japonica</name>
    <name type="common">Rice</name>
    <dbReference type="NCBI Taxonomy" id="39947"/>
    <lineage>
        <taxon>Eukaryota</taxon>
        <taxon>Viridiplantae</taxon>
        <taxon>Streptophyta</taxon>
        <taxon>Embryophyta</taxon>
        <taxon>Tracheophyta</taxon>
        <taxon>Spermatophyta</taxon>
        <taxon>Magnoliopsida</taxon>
        <taxon>Liliopsida</taxon>
        <taxon>Poales</taxon>
        <taxon>Poaceae</taxon>
        <taxon>BOP clade</taxon>
        <taxon>Oryzoideae</taxon>
        <taxon>Oryzeae</taxon>
        <taxon>Oryzinae</taxon>
        <taxon>Oryza</taxon>
        <taxon>Oryza sativa</taxon>
    </lineage>
</organism>
<feature type="chain" id="PRO_0000282509" description="DEAD-box ATP-dependent RNA helicase 16">
    <location>
        <begin position="1"/>
        <end position="670"/>
    </location>
</feature>
<feature type="domain" description="Helicase ATP-binding" evidence="1">
    <location>
        <begin position="123"/>
        <end position="306"/>
    </location>
</feature>
<feature type="domain" description="Helicase C-terminal" evidence="2">
    <location>
        <begin position="340"/>
        <end position="523"/>
    </location>
</feature>
<feature type="region of interest" description="Disordered" evidence="3">
    <location>
        <begin position="1"/>
        <end position="97"/>
    </location>
</feature>
<feature type="region of interest" description="Disordered" evidence="3">
    <location>
        <begin position="616"/>
        <end position="670"/>
    </location>
</feature>
<feature type="short sequence motif" description="Q motif">
    <location>
        <begin position="92"/>
        <end position="120"/>
    </location>
</feature>
<feature type="short sequence motif" description="DEAD box">
    <location>
        <begin position="254"/>
        <end position="257"/>
    </location>
</feature>
<feature type="compositionally biased region" description="Low complexity" evidence="3">
    <location>
        <begin position="1"/>
        <end position="10"/>
    </location>
</feature>
<feature type="compositionally biased region" description="Basic and acidic residues" evidence="3">
    <location>
        <begin position="18"/>
        <end position="30"/>
    </location>
</feature>
<feature type="compositionally biased region" description="Basic and acidic residues" evidence="3">
    <location>
        <begin position="40"/>
        <end position="49"/>
    </location>
</feature>
<feature type="compositionally biased region" description="Basic and acidic residues" evidence="3">
    <location>
        <begin position="654"/>
        <end position="670"/>
    </location>
</feature>
<feature type="binding site" evidence="1">
    <location>
        <begin position="136"/>
        <end position="143"/>
    </location>
    <ligand>
        <name>ATP</name>
        <dbReference type="ChEBI" id="CHEBI:30616"/>
    </ligand>
</feature>
<keyword id="KW-0067">ATP-binding</keyword>
<keyword id="KW-0347">Helicase</keyword>
<keyword id="KW-0378">Hydrolase</keyword>
<keyword id="KW-0547">Nucleotide-binding</keyword>
<keyword id="KW-1185">Reference proteome</keyword>
<keyword id="KW-0694">RNA-binding</keyword>
<accession>Q6ATJ8</accession>
<accession>B7EEE3</accession>
<accession>Q851G0</accession>
<name>RH16_ORYSJ</name>
<gene>
    <name type="ordered locus">Os03g0728800</name>
    <name type="ordered locus">LOC_Os03g51900</name>
    <name type="ORF">OSJNBa0005H20.2</name>
    <name type="ORF">OSJNBb0011H13.1</name>
</gene>
<reference key="1">
    <citation type="journal article" date="2005" name="Genome Res.">
        <title>Sequence, annotation, and analysis of synteny between rice chromosome 3 and diverged grass species.</title>
        <authorList>
            <consortium name="The rice chromosome 3 sequencing consortium"/>
            <person name="Buell C.R."/>
            <person name="Yuan Q."/>
            <person name="Ouyang S."/>
            <person name="Liu J."/>
            <person name="Zhu W."/>
            <person name="Wang A."/>
            <person name="Maiti R."/>
            <person name="Haas B."/>
            <person name="Wortman J."/>
            <person name="Pertea M."/>
            <person name="Jones K.M."/>
            <person name="Kim M."/>
            <person name="Overton L."/>
            <person name="Tsitrin T."/>
            <person name="Fadrosh D."/>
            <person name="Bera J."/>
            <person name="Weaver B."/>
            <person name="Jin S."/>
            <person name="Johri S."/>
            <person name="Reardon M."/>
            <person name="Webb K."/>
            <person name="Hill J."/>
            <person name="Moffat K."/>
            <person name="Tallon L."/>
            <person name="Van Aken S."/>
            <person name="Lewis M."/>
            <person name="Utterback T."/>
            <person name="Feldblyum T."/>
            <person name="Zismann V."/>
            <person name="Iobst S."/>
            <person name="Hsiao J."/>
            <person name="de Vazeille A.R."/>
            <person name="Salzberg S.L."/>
            <person name="White O."/>
            <person name="Fraser C.M."/>
            <person name="Yu Y."/>
            <person name="Kim H."/>
            <person name="Rambo T."/>
            <person name="Currie J."/>
            <person name="Collura K."/>
            <person name="Kernodle-Thompson S."/>
            <person name="Wei F."/>
            <person name="Kudrna K."/>
            <person name="Ammiraju J.S.S."/>
            <person name="Luo M."/>
            <person name="Goicoechea J.L."/>
            <person name="Wing R.A."/>
            <person name="Henry D."/>
            <person name="Oates R."/>
            <person name="Palmer M."/>
            <person name="Pries G."/>
            <person name="Saski C."/>
            <person name="Simmons J."/>
            <person name="Soderlund C."/>
            <person name="Nelson W."/>
            <person name="de la Bastide M."/>
            <person name="Spiegel L."/>
            <person name="Nascimento L."/>
            <person name="Huang E."/>
            <person name="Preston R."/>
            <person name="Zutavern T."/>
            <person name="Palmer L."/>
            <person name="O'Shaughnessy A."/>
            <person name="Dike S."/>
            <person name="McCombie W.R."/>
            <person name="Minx P."/>
            <person name="Cordum H."/>
            <person name="Wilson R."/>
            <person name="Jin W."/>
            <person name="Lee H.R."/>
            <person name="Jiang J."/>
            <person name="Jackson S."/>
        </authorList>
    </citation>
    <scope>NUCLEOTIDE SEQUENCE [LARGE SCALE GENOMIC DNA]</scope>
    <source>
        <strain>cv. Nipponbare</strain>
    </source>
</reference>
<reference key="2">
    <citation type="journal article" date="2005" name="Nature">
        <title>The map-based sequence of the rice genome.</title>
        <authorList>
            <consortium name="International rice genome sequencing project (IRGSP)"/>
        </authorList>
    </citation>
    <scope>NUCLEOTIDE SEQUENCE [LARGE SCALE GENOMIC DNA]</scope>
    <source>
        <strain>cv. Nipponbare</strain>
    </source>
</reference>
<reference key="3">
    <citation type="journal article" date="2008" name="Nucleic Acids Res.">
        <title>The rice annotation project database (RAP-DB): 2008 update.</title>
        <authorList>
            <consortium name="The rice annotation project (RAP)"/>
        </authorList>
    </citation>
    <scope>GENOME REANNOTATION</scope>
    <source>
        <strain>cv. Nipponbare</strain>
    </source>
</reference>
<reference key="4">
    <citation type="journal article" date="2013" name="Rice">
        <title>Improvement of the Oryza sativa Nipponbare reference genome using next generation sequence and optical map data.</title>
        <authorList>
            <person name="Kawahara Y."/>
            <person name="de la Bastide M."/>
            <person name="Hamilton J.P."/>
            <person name="Kanamori H."/>
            <person name="McCombie W.R."/>
            <person name="Ouyang S."/>
            <person name="Schwartz D.C."/>
            <person name="Tanaka T."/>
            <person name="Wu J."/>
            <person name="Zhou S."/>
            <person name="Childs K.L."/>
            <person name="Davidson R.M."/>
            <person name="Lin H."/>
            <person name="Quesada-Ocampo L."/>
            <person name="Vaillancourt B."/>
            <person name="Sakai H."/>
            <person name="Lee S.S."/>
            <person name="Kim J."/>
            <person name="Numa H."/>
            <person name="Itoh T."/>
            <person name="Buell C.R."/>
            <person name="Matsumoto T."/>
        </authorList>
    </citation>
    <scope>GENOME REANNOTATION</scope>
    <source>
        <strain>cv. Nipponbare</strain>
    </source>
</reference>
<reference key="5">
    <citation type="journal article" date="2003" name="Science">
        <title>Collection, mapping, and annotation of over 28,000 cDNA clones from japonica rice.</title>
        <authorList>
            <consortium name="The rice full-length cDNA consortium"/>
        </authorList>
    </citation>
    <scope>NUCLEOTIDE SEQUENCE [LARGE SCALE MRNA]</scope>
    <source>
        <strain>cv. Nipponbare</strain>
    </source>
</reference>
<protein>
    <recommendedName>
        <fullName>DEAD-box ATP-dependent RNA helicase 16</fullName>
        <ecNumber>3.6.4.13</ecNumber>
    </recommendedName>
</protein>
<sequence length="670" mass="74332">MAAAAAASSMAKRKQRKAATEQEVENHDEATVAAEAGPENDGHTAHAAEEAAAAEEGVEREGGGEGGAEGEEGPDAAARGGEEGKEEEEREVSFDELGLDEQLKRALRKKGLDKATPIQREAIPLILEGKDVVAKAKTGSGKTFAYLLPMLHELLKLSAEGRIRKSAPNVFILVPTRELCQQVHNEASSLLEFCTSKLKVVQVNASMSDKDIKVALSGPPNILVTTPACVASCISKGIIRGSSIKESLSMMILDEADLLLSYRCEDDIKALVPHIPRSCQSILMSATSSADIEKLTKLLLHNPFILTLTEVGHAKDDLIPKNVQQFWISCDAKDKMLYILVLLKLELIQKKVLIFVNSIDSAFKLRLFLEKFGIRSSVLNAELPQNSRLHIIQAFNARLFDYLIATDDNKSKEERQANKGNKKDSRVSRKQLQQTLDAEFGVVRGIDFKNVFTVVNYDMPPDPAGYVHRVGRTGRANKTGASISLVSPKENGIFEDIENMLKDVENRDTSCISPFPLLTKNAVESLRYRAQDVARSVTTRDIKEARRQDIKNEILNSEKLKAHFDENPRDLDLLKHDKLLSNKEIPAHLRDVPEYLIDPTTKEASNVVKLSRAAMDIDKPRRRKRMGFKGGSGRSSDPLKTFSAEGKSRRRGRKERDGEQDRRKRKKVES</sequence>